<comment type="function">
    <text evidence="1 5 6 7 9">Mitochondrial proton-coupled zinc ion antiporter mediating the export of zinc from the mitochondria and involved in zinc homeostasis, zinc mobilization as well as mitochondrial morphology and health (PubMed:28334855, PubMed:34397090, PubMed:34433664, PubMed:35614220). In nucleus, functions as a secondary coactivator for nuclear receptors by cooperating with p160 coactivators subtypes. Plays a role in transcriptional activation of Wnt-responsive genes (By similarity).</text>
</comment>
<comment type="catalytic activity">
    <reaction evidence="5 6 7">
        <text>Zn(2+)(in) + 2 H(+)(out) = Zn(2+)(out) + 2 H(+)(in)</text>
        <dbReference type="Rhea" id="RHEA:72627"/>
        <dbReference type="ChEBI" id="CHEBI:15378"/>
        <dbReference type="ChEBI" id="CHEBI:29105"/>
    </reaction>
</comment>
<comment type="subunit">
    <text evidence="1">Interacts with GRIP1, ESR1 and AR.</text>
</comment>
<comment type="subcellular location">
    <subcellularLocation>
        <location evidence="6 9">Mitochondrion membrane</location>
        <topology evidence="12">Multi-pass membrane protein</topology>
    </subcellularLocation>
    <subcellularLocation>
        <location evidence="3">Nucleus</location>
    </subcellularLocation>
    <subcellularLocation>
        <location evidence="5">Endoplasmic reticulum</location>
    </subcellularLocation>
    <text evidence="3 5 9">Partial co-localization with endoplasmic reticulum (PubMed:28334855). Linked to mitochondrial ribosomes (PubMed:35614220).</text>
</comment>
<comment type="tissue specificity">
    <text evidence="3 5">Ubiquitously expressed in fetal and adult tissues and cancer cell lines.</text>
</comment>
<comment type="disease" evidence="5 7 8">
    <disease id="DI-05046">
        <name>Birk-Landau-Perez syndrome</name>
        <acronym>BILAPES</acronym>
        <description>An autosomal recessive syndrome characterized by early-childhood onset of different combinations of intellectual disability, muscle weakness, camptocormia, oculomotor apraxia, and nephropathy.</description>
        <dbReference type="MIM" id="617595"/>
    </disease>
    <text>The disease is caused by variants affecting the gene represented in this entry.</text>
</comment>
<comment type="similarity">
    <text evidence="12">Belongs to the cation diffusion facilitator (CDF) transporter (TC 2.A.4) family. SLC30A subfamily.</text>
</comment>
<comment type="sequence caution" evidence="12">
    <conflict type="miscellaneous discrepancy">
        <sequence resource="EMBL-CDS" id="AAP83846"/>
    </conflict>
    <text>Unlikely isoform. Aberrant splice sites.</text>
</comment>
<comment type="sequence caution" evidence="12">
    <conflict type="erroneous gene model prediction">
        <sequence resource="EMBL-CDS" id="AAY40966"/>
    </conflict>
</comment>
<name>ZNT9_HUMAN</name>
<proteinExistence type="evidence at protein level"/>
<organism>
    <name type="scientific">Homo sapiens</name>
    <name type="common">Human</name>
    <dbReference type="NCBI Taxonomy" id="9606"/>
    <lineage>
        <taxon>Eukaryota</taxon>
        <taxon>Metazoa</taxon>
        <taxon>Chordata</taxon>
        <taxon>Craniata</taxon>
        <taxon>Vertebrata</taxon>
        <taxon>Euteleostomi</taxon>
        <taxon>Mammalia</taxon>
        <taxon>Eutheria</taxon>
        <taxon>Euarchontoglires</taxon>
        <taxon>Primates</taxon>
        <taxon>Haplorrhini</taxon>
        <taxon>Catarrhini</taxon>
        <taxon>Hominidae</taxon>
        <taxon>Homo</taxon>
    </lineage>
</organism>
<feature type="transit peptide" description="Mitochondrion" evidence="2">
    <location>
        <begin position="1"/>
        <end position="67"/>
    </location>
</feature>
<feature type="chain" id="PRO_0000295805" description="Proton-coupled zinc antiporter SLC30A9, mitochondrial">
    <location>
        <begin position="68"/>
        <end position="568"/>
    </location>
</feature>
<feature type="transmembrane region" description="Helical" evidence="2">
    <location>
        <begin position="239"/>
        <end position="259"/>
    </location>
</feature>
<feature type="transmembrane region" description="Helical" evidence="2">
    <location>
        <begin position="314"/>
        <end position="334"/>
    </location>
</feature>
<feature type="transmembrane region" description="Helical" evidence="2">
    <location>
        <begin position="342"/>
        <end position="362"/>
    </location>
</feature>
<feature type="transmembrane region" description="Helical" evidence="2">
    <location>
        <begin position="392"/>
        <end position="412"/>
    </location>
</feature>
<feature type="transmembrane region" description="Helical" evidence="2">
    <location>
        <begin position="424"/>
        <end position="444"/>
    </location>
</feature>
<feature type="short sequence motif" description="LXXLL motif" evidence="3">
    <location>
        <begin position="462"/>
        <end position="466"/>
    </location>
</feature>
<feature type="sequence variant" id="VAR_052003" description="In dbSNP:rs1047626." evidence="3 4 10">
    <original>M</original>
    <variation>V</variation>
    <location>
        <position position="50"/>
    </location>
</feature>
<feature type="sequence variant" id="VAR_052004" description="In dbSNP:rs2581423." evidence="3 4 10">
    <original>T</original>
    <variation>A</variation>
    <location>
        <position position="97"/>
    </location>
</feature>
<feature type="sequence variant" id="VAR_079365" description="In BILAPES; no effect on Wnt-signaling; no change in mitochondrial subcellular location; decrease in cytosolic free zinc levels." evidence="5 7">
    <location>
        <position position="350"/>
    </location>
</feature>
<feature type="sequence variant" id="VAR_052005" description="In dbSNP:rs1801962.">
    <original>L</original>
    <variation>S</variation>
    <location>
        <position position="353"/>
    </location>
</feature>
<feature type="sequence conflict" description="In Ref. 3; AAP83846." evidence="12" ref="3">
    <original>C</original>
    <variation>Y</variation>
    <location>
        <position position="141"/>
    </location>
</feature>
<feature type="sequence conflict" description="In Ref. 3; AAP83846." evidence="12" ref="3">
    <original>E</original>
    <variation>V</variation>
    <location>
        <position position="356"/>
    </location>
</feature>
<feature type="sequence conflict" description="In Ref. 6; AAH22981." evidence="12" ref="6">
    <original>V</original>
    <variation>A</variation>
    <location>
        <position position="401"/>
    </location>
</feature>
<feature type="strand" evidence="14">
    <location>
        <begin position="129"/>
        <end position="132"/>
    </location>
</feature>
<feature type="helix" evidence="14">
    <location>
        <begin position="133"/>
        <end position="139"/>
    </location>
</feature>
<feature type="helix" evidence="14">
    <location>
        <begin position="144"/>
        <end position="149"/>
    </location>
</feature>
<feature type="strand" evidence="14">
    <location>
        <begin position="167"/>
        <end position="169"/>
    </location>
</feature>
<feature type="helix" evidence="14">
    <location>
        <begin position="170"/>
        <end position="180"/>
    </location>
</feature>
<feature type="strand" evidence="14">
    <location>
        <begin position="181"/>
        <end position="183"/>
    </location>
</feature>
<feature type="helix" evidence="14">
    <location>
        <begin position="184"/>
        <end position="209"/>
    </location>
</feature>
<protein>
    <recommendedName>
        <fullName evidence="12">Proton-coupled zinc antiporter SLC30A9, mitochondrial</fullName>
    </recommendedName>
    <alternativeName>
        <fullName evidence="11">Human embryonic lung protein</fullName>
        <shortName evidence="11">HuEL</shortName>
    </alternativeName>
    <alternativeName>
        <fullName>Solute carrier family 30 member 9</fullName>
    </alternativeName>
    <alternativeName>
        <fullName evidence="12">Zinc transporter 9</fullName>
        <shortName>ZnT-9</shortName>
    </alternativeName>
</protein>
<evidence type="ECO:0000250" key="1">
    <source>
        <dbReference type="UniProtKB" id="Q5IRJ6"/>
    </source>
</evidence>
<evidence type="ECO:0000255" key="2"/>
<evidence type="ECO:0000269" key="3">
    <source>
    </source>
</evidence>
<evidence type="ECO:0000269" key="4">
    <source>
    </source>
</evidence>
<evidence type="ECO:0000269" key="5">
    <source>
    </source>
</evidence>
<evidence type="ECO:0000269" key="6">
    <source>
    </source>
</evidence>
<evidence type="ECO:0000269" key="7">
    <source>
    </source>
</evidence>
<evidence type="ECO:0000269" key="8">
    <source>
    </source>
</evidence>
<evidence type="ECO:0000269" key="9">
    <source>
    </source>
</evidence>
<evidence type="ECO:0000269" key="10">
    <source ref="3"/>
</evidence>
<evidence type="ECO:0000303" key="11">
    <source>
    </source>
</evidence>
<evidence type="ECO:0000305" key="12"/>
<evidence type="ECO:0000312" key="13">
    <source>
        <dbReference type="HGNC" id="HGNC:1329"/>
    </source>
</evidence>
<evidence type="ECO:0007829" key="14">
    <source>
        <dbReference type="PDB" id="2ENK"/>
    </source>
</evidence>
<sequence>MLPGLAAAAAHRCSWSSLCRLRLRCRAAACNPSDRQEWQNLVTFGSFSNMVPCSHPYIGTLSQVKLYSTNVQKEGQGSQTLRVEKVPSFETAEGIGTELKAPLKQEPLQVRVKAVLKKREYGSKYTQNNFITGVRAINEFCLKSSDLEQLRKIRRRSPHEDTESFTVYLRSDVEAKSLEVWGSPEALAREKKLRKEAEIEYRERLFRNQKILREYRDFLGNTKPRSRTASVFFKGPGKVVMVAICINGLNCFFKFLAWIYTGSASMFSEAIHSLSDTCNQGLLALGISKSVQTPDPSHPYGFSNMRYISSLISGVGIFMMGAGLSWYHGVMGLLHPQPIESLLWAYCILAGSLVSEGATLLVAVNELRRNARAKGMSFYKYVMESRDPSTNVILLEDTAAVLGVIIAATCMGLTSITGNPLYDSLGSLGVGTLLGMVSAFLIYTNTEALLGRSIQPEQVQRLTELLENDPSVRAIHDVKATDLGLGKVRFKAEVDFDGRVVTRSYLEKQDFDQMLQEIQEVKTPEELETFMLKHGENIIDTLGAEVDRLEKELKKRNPEVRHVDLEIL</sequence>
<dbReference type="EMBL" id="AF006621">
    <property type="protein sequence ID" value="AAB87763.2"/>
    <property type="molecule type" value="mRNA"/>
</dbReference>
<dbReference type="EMBL" id="AY319413">
    <property type="protein sequence ID" value="AAP83846.1"/>
    <property type="status" value="ALT_SEQ"/>
    <property type="molecule type" value="mRNA"/>
</dbReference>
<dbReference type="EMBL" id="AY594282">
    <property type="protein sequence ID" value="AAT02479.1"/>
    <property type="molecule type" value="mRNA"/>
</dbReference>
<dbReference type="EMBL" id="AC113151">
    <property type="protein sequence ID" value="AAY40966.1"/>
    <property type="status" value="ALT_SEQ"/>
    <property type="molecule type" value="Genomic_DNA"/>
</dbReference>
<dbReference type="EMBL" id="BC007732">
    <property type="protein sequence ID" value="AAH07732.1"/>
    <property type="molecule type" value="mRNA"/>
</dbReference>
<dbReference type="EMBL" id="BC016949">
    <property type="protein sequence ID" value="AAH16949.1"/>
    <property type="molecule type" value="mRNA"/>
</dbReference>
<dbReference type="EMBL" id="BC022981">
    <property type="protein sequence ID" value="AAH22981.1"/>
    <property type="molecule type" value="mRNA"/>
</dbReference>
<dbReference type="CCDS" id="CCDS3465.1"/>
<dbReference type="RefSeq" id="NP_006336.3">
    <property type="nucleotide sequence ID" value="NM_006345.3"/>
</dbReference>
<dbReference type="PDB" id="2ENK">
    <property type="method" value="NMR"/>
    <property type="chains" value="A=124-217"/>
</dbReference>
<dbReference type="PDBsum" id="2ENK"/>
<dbReference type="SMR" id="Q6PML9"/>
<dbReference type="BioGRID" id="115726">
    <property type="interactions" value="183"/>
</dbReference>
<dbReference type="FunCoup" id="Q6PML9">
    <property type="interactions" value="1972"/>
</dbReference>
<dbReference type="IntAct" id="Q6PML9">
    <property type="interactions" value="49"/>
</dbReference>
<dbReference type="MINT" id="Q6PML9"/>
<dbReference type="STRING" id="9606.ENSP00000264451"/>
<dbReference type="DrugBank" id="DB14533">
    <property type="generic name" value="Zinc chloride"/>
</dbReference>
<dbReference type="DrugBank" id="DB14548">
    <property type="generic name" value="Zinc sulfate, unspecified form"/>
</dbReference>
<dbReference type="TCDB" id="2.A.4.6.1">
    <property type="family name" value="the cation diffusion facilitator (cdf) family"/>
</dbReference>
<dbReference type="iPTMnet" id="Q6PML9"/>
<dbReference type="PhosphoSitePlus" id="Q6PML9"/>
<dbReference type="SwissPalm" id="Q6PML9"/>
<dbReference type="BioMuta" id="SLC30A9"/>
<dbReference type="DMDM" id="74722746"/>
<dbReference type="jPOST" id="Q6PML9"/>
<dbReference type="MassIVE" id="Q6PML9"/>
<dbReference type="PaxDb" id="9606-ENSP00000264451"/>
<dbReference type="PeptideAtlas" id="Q6PML9"/>
<dbReference type="ProteomicsDB" id="67254"/>
<dbReference type="Pumba" id="Q6PML9"/>
<dbReference type="Antibodypedia" id="1339">
    <property type="antibodies" value="152 antibodies from 27 providers"/>
</dbReference>
<dbReference type="DNASU" id="10463"/>
<dbReference type="Ensembl" id="ENST00000264451.12">
    <property type="protein sequence ID" value="ENSP00000264451.6"/>
    <property type="gene ID" value="ENSG00000014824.14"/>
</dbReference>
<dbReference type="GeneID" id="10463"/>
<dbReference type="KEGG" id="hsa:10463"/>
<dbReference type="MANE-Select" id="ENST00000264451.12">
    <property type="protein sequence ID" value="ENSP00000264451.6"/>
    <property type="RefSeq nucleotide sequence ID" value="NM_006345.4"/>
    <property type="RefSeq protein sequence ID" value="NP_006336.3"/>
</dbReference>
<dbReference type="UCSC" id="uc003gwl.4">
    <property type="organism name" value="human"/>
</dbReference>
<dbReference type="AGR" id="HGNC:1329"/>
<dbReference type="CTD" id="10463"/>
<dbReference type="DisGeNET" id="10463"/>
<dbReference type="GeneCards" id="SLC30A9"/>
<dbReference type="HGNC" id="HGNC:1329">
    <property type="gene designation" value="SLC30A9"/>
</dbReference>
<dbReference type="HPA" id="ENSG00000014824">
    <property type="expression patterns" value="Low tissue specificity"/>
</dbReference>
<dbReference type="MalaCards" id="SLC30A9"/>
<dbReference type="MIM" id="604604">
    <property type="type" value="gene"/>
</dbReference>
<dbReference type="MIM" id="617595">
    <property type="type" value="phenotype"/>
</dbReference>
<dbReference type="neXtProt" id="NX_Q6PML9"/>
<dbReference type="OpenTargets" id="ENSG00000014824"/>
<dbReference type="Orphanet" id="505242">
    <property type="disease" value="Psychomotor regression-oculomotor apraxia-movement disorder-nephropathy syndrome"/>
</dbReference>
<dbReference type="PharmGKB" id="PA25909"/>
<dbReference type="VEuPathDB" id="HostDB:ENSG00000014824"/>
<dbReference type="eggNOG" id="KOG2802">
    <property type="taxonomic scope" value="Eukaryota"/>
</dbReference>
<dbReference type="GeneTree" id="ENSGT00390000008346"/>
<dbReference type="HOGENOM" id="CLU_021126_3_0_1"/>
<dbReference type="InParanoid" id="Q6PML9"/>
<dbReference type="OMA" id="HSMFSEC"/>
<dbReference type="OrthoDB" id="435980at2759"/>
<dbReference type="PAN-GO" id="Q6PML9">
    <property type="GO annotations" value="4 GO annotations based on evolutionary models"/>
</dbReference>
<dbReference type="PhylomeDB" id="Q6PML9"/>
<dbReference type="TreeFam" id="TF314526"/>
<dbReference type="PathwayCommons" id="Q6PML9"/>
<dbReference type="SignaLink" id="Q6PML9"/>
<dbReference type="SIGNOR" id="Q6PML9"/>
<dbReference type="BioGRID-ORCS" id="10463">
    <property type="hits" value="110 hits in 1172 CRISPR screens"/>
</dbReference>
<dbReference type="ChiTaRS" id="SLC30A9">
    <property type="organism name" value="human"/>
</dbReference>
<dbReference type="EvolutionaryTrace" id="Q6PML9"/>
<dbReference type="GenomeRNAi" id="10463"/>
<dbReference type="Pharos" id="Q6PML9">
    <property type="development level" value="Tbio"/>
</dbReference>
<dbReference type="PRO" id="PR:Q6PML9"/>
<dbReference type="Proteomes" id="UP000005640">
    <property type="component" value="Chromosome 4"/>
</dbReference>
<dbReference type="RNAct" id="Q6PML9">
    <property type="molecule type" value="protein"/>
</dbReference>
<dbReference type="Bgee" id="ENSG00000014824">
    <property type="expression patterns" value="Expressed in cortical plate and 214 other cell types or tissues"/>
</dbReference>
<dbReference type="ExpressionAtlas" id="Q6PML9">
    <property type="expression patterns" value="baseline and differential"/>
</dbReference>
<dbReference type="GO" id="GO:0031410">
    <property type="term" value="C:cytoplasmic vesicle"/>
    <property type="evidence" value="ECO:0000314"/>
    <property type="project" value="UniProtKB"/>
</dbReference>
<dbReference type="GO" id="GO:0005856">
    <property type="term" value="C:cytoskeleton"/>
    <property type="evidence" value="ECO:0000314"/>
    <property type="project" value="UniProtKB"/>
</dbReference>
<dbReference type="GO" id="GO:0005783">
    <property type="term" value="C:endoplasmic reticulum"/>
    <property type="evidence" value="ECO:0000314"/>
    <property type="project" value="UniProtKB"/>
</dbReference>
<dbReference type="GO" id="GO:0031966">
    <property type="term" value="C:mitochondrial membrane"/>
    <property type="evidence" value="ECO:0000314"/>
    <property type="project" value="UniProtKB"/>
</dbReference>
<dbReference type="GO" id="GO:0005739">
    <property type="term" value="C:mitochondrion"/>
    <property type="evidence" value="ECO:0006056"/>
    <property type="project" value="FlyBase"/>
</dbReference>
<dbReference type="GO" id="GO:0005634">
    <property type="term" value="C:nucleus"/>
    <property type="evidence" value="ECO:0000314"/>
    <property type="project" value="UniProtKB"/>
</dbReference>
<dbReference type="GO" id="GO:0015297">
    <property type="term" value="F:antiporter activity"/>
    <property type="evidence" value="ECO:0007669"/>
    <property type="project" value="UniProtKB-KW"/>
</dbReference>
<dbReference type="GO" id="GO:0003682">
    <property type="term" value="F:chromatin binding"/>
    <property type="evidence" value="ECO:0007669"/>
    <property type="project" value="Ensembl"/>
</dbReference>
<dbReference type="GO" id="GO:0016922">
    <property type="term" value="F:nuclear receptor binding"/>
    <property type="evidence" value="ECO:0007669"/>
    <property type="project" value="Ensembl"/>
</dbReference>
<dbReference type="GO" id="GO:0003713">
    <property type="term" value="F:transcription coactivator activity"/>
    <property type="evidence" value="ECO:0007669"/>
    <property type="project" value="Ensembl"/>
</dbReference>
<dbReference type="GO" id="GO:0005385">
    <property type="term" value="F:zinc ion transmembrane transporter activity"/>
    <property type="evidence" value="ECO:0000314"/>
    <property type="project" value="UniProtKB"/>
</dbReference>
<dbReference type="GO" id="GO:0006882">
    <property type="term" value="P:intracellular zinc ion homeostasis"/>
    <property type="evidence" value="ECO:0000315"/>
    <property type="project" value="UniProtKB"/>
</dbReference>
<dbReference type="GO" id="GO:0006289">
    <property type="term" value="P:nucleotide-excision repair"/>
    <property type="evidence" value="ECO:0000304"/>
    <property type="project" value="BHF-UCL"/>
</dbReference>
<dbReference type="GO" id="GO:0045944">
    <property type="term" value="P:positive regulation of transcription by RNA polymerase II"/>
    <property type="evidence" value="ECO:0007669"/>
    <property type="project" value="Ensembl"/>
</dbReference>
<dbReference type="GO" id="GO:0010821">
    <property type="term" value="P:regulation of mitochondrion organization"/>
    <property type="evidence" value="ECO:0000314"/>
    <property type="project" value="UniProtKB"/>
</dbReference>
<dbReference type="GO" id="GO:0006829">
    <property type="term" value="P:zinc ion transport"/>
    <property type="evidence" value="ECO:0000315"/>
    <property type="project" value="UniProtKB"/>
</dbReference>
<dbReference type="CDD" id="cd21078">
    <property type="entry name" value="NTD_ZNT9"/>
    <property type="match status" value="1"/>
</dbReference>
<dbReference type="FunFam" id="1.20.1510.10:FF:000004">
    <property type="entry name" value="zinc transporter 9 isoform X1"/>
    <property type="match status" value="1"/>
</dbReference>
<dbReference type="FunFam" id="3.90.530.10:FF:000002">
    <property type="entry name" value="zinc transporter 9 isoform X1"/>
    <property type="match status" value="1"/>
</dbReference>
<dbReference type="Gene3D" id="1.20.1510.10">
    <property type="entry name" value="Cation efflux protein transmembrane domain"/>
    <property type="match status" value="1"/>
</dbReference>
<dbReference type="Gene3D" id="3.90.530.10">
    <property type="entry name" value="XPA C-terminal domain"/>
    <property type="match status" value="1"/>
</dbReference>
<dbReference type="InterPro" id="IPR002524">
    <property type="entry name" value="Cation_efflux"/>
</dbReference>
<dbReference type="InterPro" id="IPR027469">
    <property type="entry name" value="Cation_efflux_TMD_sf"/>
</dbReference>
<dbReference type="InterPro" id="IPR009061">
    <property type="entry name" value="DNA-bd_dom_put_sf"/>
</dbReference>
<dbReference type="InterPro" id="IPR040177">
    <property type="entry name" value="SLC30A9"/>
</dbReference>
<dbReference type="InterPro" id="IPR037129">
    <property type="entry name" value="XPA_sf"/>
</dbReference>
<dbReference type="NCBIfam" id="TIGR01297">
    <property type="entry name" value="CDF"/>
    <property type="match status" value="1"/>
</dbReference>
<dbReference type="PANTHER" id="PTHR13414">
    <property type="entry name" value="HUEL-CATION TRANSPORTER"/>
    <property type="match status" value="1"/>
</dbReference>
<dbReference type="PANTHER" id="PTHR13414:SF9">
    <property type="entry name" value="PROTON-COUPLED ZINC ANTIPORTER SLC30A9, MITOCHONDRIAL"/>
    <property type="match status" value="1"/>
</dbReference>
<dbReference type="Pfam" id="PF01545">
    <property type="entry name" value="Cation_efflux"/>
    <property type="match status" value="1"/>
</dbReference>
<dbReference type="SUPFAM" id="SSF161111">
    <property type="entry name" value="Cation efflux protein transmembrane domain-like"/>
    <property type="match status" value="1"/>
</dbReference>
<dbReference type="SUPFAM" id="SSF46955">
    <property type="entry name" value="Putative DNA-binding domain"/>
    <property type="match status" value="1"/>
</dbReference>
<reference key="1">
    <citation type="journal article" date="1999" name="Genomics">
        <title>The novel human HUEL (C4orf1) gene maps to chromosome 4p12-p13 and encodes a nuclear protein containing the nuclear receptor interaction motif.</title>
        <authorList>
            <person name="Sim D.L.C."/>
            <person name="Chow V.T.K."/>
        </authorList>
    </citation>
    <scope>NUCLEOTIDE SEQUENCE [MRNA]</scope>
    <scope>SUBCELLULAR LOCATION</scope>
    <scope>TISSUE SPECIFICITY</scope>
    <scope>VARIANTS VAL-50 AND ALA-97</scope>
    <source>
        <tissue>Lung</tissue>
    </source>
</reference>
<reference key="2">
    <citation type="submission" date="2000-04" db="EMBL/GenBank/DDBJ databases">
        <authorList>
            <person name="Chow V.T.K."/>
            <person name="Sim D.L.C."/>
        </authorList>
    </citation>
    <scope>SEQUENCE REVISION TO 160; 174 AND 196</scope>
    <source>
        <tissue>Lung</tissue>
    </source>
</reference>
<reference key="3">
    <citation type="submission" date="2003-06" db="EMBL/GenBank/DDBJ databases">
        <title>A human HUEL (C4orf1) isoform play the role in spermatogenesis.</title>
        <authorList>
            <person name="Xu Z.Y."/>
            <person name="Huang X.Y."/>
            <person name="Xu M."/>
            <person name="Yin L.L."/>
            <person name="Lu L."/>
            <person name="Li J.M."/>
            <person name="Zhou Z.M."/>
            <person name="Sha J.H."/>
        </authorList>
    </citation>
    <scope>NUCLEOTIDE SEQUENCE [MRNA]</scope>
    <scope>VARIANTS VAL-50 AND ALA-97</scope>
    <source>
        <tissue>Testis</tissue>
    </source>
</reference>
<reference key="4">
    <citation type="submission" date="2004-04" db="EMBL/GenBank/DDBJ databases">
        <authorList>
            <person name="Luo W."/>
            <person name="Sedehizade F."/>
            <person name="Hanck T."/>
            <person name="Reiser G."/>
        </authorList>
    </citation>
    <scope>NUCLEOTIDE SEQUENCE [MRNA]</scope>
</reference>
<reference key="5">
    <citation type="journal article" date="2005" name="Nature">
        <title>Generation and annotation of the DNA sequences of human chromosomes 2 and 4.</title>
        <authorList>
            <person name="Hillier L.W."/>
            <person name="Graves T.A."/>
            <person name="Fulton R.S."/>
            <person name="Fulton L.A."/>
            <person name="Pepin K.H."/>
            <person name="Minx P."/>
            <person name="Wagner-McPherson C."/>
            <person name="Layman D."/>
            <person name="Wylie K."/>
            <person name="Sekhon M."/>
            <person name="Becker M.C."/>
            <person name="Fewell G.A."/>
            <person name="Delehaunty K.D."/>
            <person name="Miner T.L."/>
            <person name="Nash W.E."/>
            <person name="Kremitzki C."/>
            <person name="Oddy L."/>
            <person name="Du H."/>
            <person name="Sun H."/>
            <person name="Bradshaw-Cordum H."/>
            <person name="Ali J."/>
            <person name="Carter J."/>
            <person name="Cordes M."/>
            <person name="Harris A."/>
            <person name="Isak A."/>
            <person name="van Brunt A."/>
            <person name="Nguyen C."/>
            <person name="Du F."/>
            <person name="Courtney L."/>
            <person name="Kalicki J."/>
            <person name="Ozersky P."/>
            <person name="Abbott S."/>
            <person name="Armstrong J."/>
            <person name="Belter E.A."/>
            <person name="Caruso L."/>
            <person name="Cedroni M."/>
            <person name="Cotton M."/>
            <person name="Davidson T."/>
            <person name="Desai A."/>
            <person name="Elliott G."/>
            <person name="Erb T."/>
            <person name="Fronick C."/>
            <person name="Gaige T."/>
            <person name="Haakenson W."/>
            <person name="Haglund K."/>
            <person name="Holmes A."/>
            <person name="Harkins R."/>
            <person name="Kim K."/>
            <person name="Kruchowski S.S."/>
            <person name="Strong C.M."/>
            <person name="Grewal N."/>
            <person name="Goyea E."/>
            <person name="Hou S."/>
            <person name="Levy A."/>
            <person name="Martinka S."/>
            <person name="Mead K."/>
            <person name="McLellan M.D."/>
            <person name="Meyer R."/>
            <person name="Randall-Maher J."/>
            <person name="Tomlinson C."/>
            <person name="Dauphin-Kohlberg S."/>
            <person name="Kozlowicz-Reilly A."/>
            <person name="Shah N."/>
            <person name="Swearengen-Shahid S."/>
            <person name="Snider J."/>
            <person name="Strong J.T."/>
            <person name="Thompson J."/>
            <person name="Yoakum M."/>
            <person name="Leonard S."/>
            <person name="Pearman C."/>
            <person name="Trani L."/>
            <person name="Radionenko M."/>
            <person name="Waligorski J.E."/>
            <person name="Wang C."/>
            <person name="Rock S.M."/>
            <person name="Tin-Wollam A.-M."/>
            <person name="Maupin R."/>
            <person name="Latreille P."/>
            <person name="Wendl M.C."/>
            <person name="Yang S.-P."/>
            <person name="Pohl C."/>
            <person name="Wallis J.W."/>
            <person name="Spieth J."/>
            <person name="Bieri T.A."/>
            <person name="Berkowicz N."/>
            <person name="Nelson J.O."/>
            <person name="Osborne J."/>
            <person name="Ding L."/>
            <person name="Meyer R."/>
            <person name="Sabo A."/>
            <person name="Shotland Y."/>
            <person name="Sinha P."/>
            <person name="Wohldmann P.E."/>
            <person name="Cook L.L."/>
            <person name="Hickenbotham M.T."/>
            <person name="Eldred J."/>
            <person name="Williams D."/>
            <person name="Jones T.A."/>
            <person name="She X."/>
            <person name="Ciccarelli F.D."/>
            <person name="Izaurralde E."/>
            <person name="Taylor J."/>
            <person name="Schmutz J."/>
            <person name="Myers R.M."/>
            <person name="Cox D.R."/>
            <person name="Huang X."/>
            <person name="McPherson J.D."/>
            <person name="Mardis E.R."/>
            <person name="Clifton S.W."/>
            <person name="Warren W.C."/>
            <person name="Chinwalla A.T."/>
            <person name="Eddy S.R."/>
            <person name="Marra M.A."/>
            <person name="Ovcharenko I."/>
            <person name="Furey T.S."/>
            <person name="Miller W."/>
            <person name="Eichler E.E."/>
            <person name="Bork P."/>
            <person name="Suyama M."/>
            <person name="Torrents D."/>
            <person name="Waterston R.H."/>
            <person name="Wilson R.K."/>
        </authorList>
    </citation>
    <scope>NUCLEOTIDE SEQUENCE [LARGE SCALE GENOMIC DNA]</scope>
</reference>
<reference key="6">
    <citation type="journal article" date="2004" name="Genome Res.">
        <title>The status, quality, and expansion of the NIH full-length cDNA project: the Mammalian Gene Collection (MGC).</title>
        <authorList>
            <consortium name="The MGC Project Team"/>
        </authorList>
    </citation>
    <scope>NUCLEOTIDE SEQUENCE [LARGE SCALE MRNA]</scope>
    <scope>VARIANTS VAL-50 AND ALA-97</scope>
    <source>
        <tissue>Cervix</tissue>
        <tissue>Colon</tissue>
        <tissue>Muscle</tissue>
    </source>
</reference>
<reference key="7">
    <citation type="journal article" date="2014" name="J. Proteomics">
        <title>An enzyme assisted RP-RPLC approach for in-depth analysis of human liver phosphoproteome.</title>
        <authorList>
            <person name="Bian Y."/>
            <person name="Song C."/>
            <person name="Cheng K."/>
            <person name="Dong M."/>
            <person name="Wang F."/>
            <person name="Huang J."/>
            <person name="Sun D."/>
            <person name="Wang L."/>
            <person name="Ye M."/>
            <person name="Zou H."/>
        </authorList>
    </citation>
    <scope>IDENTIFICATION BY MASS SPECTROMETRY [LARGE SCALE ANALYSIS]</scope>
    <source>
        <tissue>Liver</tissue>
    </source>
</reference>
<reference key="8">
    <citation type="journal article" date="2015" name="Proteomics">
        <title>N-terminome analysis of the human mitochondrial proteome.</title>
        <authorList>
            <person name="Vaca Jacome A.S."/>
            <person name="Rabilloud T."/>
            <person name="Schaeffer-Reiss C."/>
            <person name="Rompais M."/>
            <person name="Ayoub D."/>
            <person name="Lane L."/>
            <person name="Bairoch A."/>
            <person name="Van Dorsselaer A."/>
            <person name="Carapito C."/>
        </authorList>
    </citation>
    <scope>IDENTIFICATION BY MASS SPECTROMETRY [LARGE SCALE ANALYSIS]</scope>
</reference>
<reference key="9">
    <citation type="journal article" date="2021" name="Biochem. J.">
        <title>Evolutionary rate covariation identifies SLC30A9 (ZnT9) as a mitochondrial zinc transporter.</title>
        <authorList>
            <person name="Kowalczyk A."/>
            <person name="Gbadamosi O."/>
            <person name="Kolor K."/>
            <person name="Sosa J."/>
            <person name="Andrzejczuk L."/>
            <person name="Gibson G."/>
            <person name="St Croix C."/>
            <person name="Chikina M."/>
            <person name="Aizenman E."/>
            <person name="Clark N."/>
            <person name="Kiselyov K."/>
        </authorList>
    </citation>
    <scope>FUNCTION</scope>
    <scope>SUBCELLULAR LOCATION</scope>
    <scope>TRANSPORTER ACTIVITY</scope>
</reference>
<reference key="10">
    <citation type="journal article" date="2021" name="Proc. Natl. Acad. Sci. U.S.A.">
        <title>SLC-30A9 is required for Zn2+ homeostasis, Zn2+ mobilization, and mitochondrial health.</title>
        <authorList>
            <person name="Deng H."/>
            <person name="Qiao X."/>
            <person name="Xie T."/>
            <person name="Fu W."/>
            <person name="Li H."/>
            <person name="Zhao Y."/>
            <person name="Guo M."/>
            <person name="Feng Y."/>
            <person name="Chen L."/>
            <person name="Zhao Y."/>
            <person name="Miao L."/>
            <person name="Chen C."/>
            <person name="Shen K."/>
            <person name="Wang X."/>
        </authorList>
    </citation>
    <scope>FUNCTION</scope>
    <scope>SUBCELLULAR LOCATION</scope>
    <scope>TRANSPORTER ACTIVITY</scope>
    <scope>CHARACTERIZATION OF VARIANT BILAPES ALA-350 DEL</scope>
</reference>
<reference key="11">
    <citation type="journal article" date="2022" name="Nature">
        <title>Defining mitochondrial protein functions through deep multiomic profiling.</title>
        <authorList>
            <person name="Rensvold J.W."/>
            <person name="Shishkova E."/>
            <person name="Sverchkov Y."/>
            <person name="Miller I.J."/>
            <person name="Cetinkaya A."/>
            <person name="Pyle A."/>
            <person name="Manicki M."/>
            <person name="Brademan D.R."/>
            <person name="Alanay Y."/>
            <person name="Raiman J."/>
            <person name="Jochem A."/>
            <person name="Hutchins P.D."/>
            <person name="Peters S.R."/>
            <person name="Linke V."/>
            <person name="Overmyer K.A."/>
            <person name="Salome A.Z."/>
            <person name="Hebert A.S."/>
            <person name="Vincent C.E."/>
            <person name="Kwiecien N.W."/>
            <person name="Rush M.J.P."/>
            <person name="Westphall M.S."/>
            <person name="Craven M."/>
            <person name="Akarsu N.A."/>
            <person name="Taylor R.W."/>
            <person name="Coon J.J."/>
            <person name="Pagliarini D.J."/>
        </authorList>
    </citation>
    <scope>SUBCELLULAR LOCATION</scope>
    <scope>FUNCTION</scope>
</reference>
<reference key="12">
    <citation type="submission" date="2009-02" db="PDB data bank">
        <title>Solution structure of a putative DNA-binding domain of the human solute carrier family 30 (zinc transporter) protein.</title>
        <authorList>
            <consortium name="RIKEN structural genomics initiative (RSGI)"/>
        </authorList>
    </citation>
    <scope>STRUCTURE BY NMR OF 124-217</scope>
</reference>
<reference key="13">
    <citation type="journal article" date="2017" name="Brain">
        <title>SLC30A9 mutation affecting intracellular zinc homeostasis causes a novel cerebro-renal syndrome.</title>
        <authorList>
            <person name="Perez Y."/>
            <person name="Shorer Z."/>
            <person name="Liani-Leibson K."/>
            <person name="Chabosseau P."/>
            <person name="Kadir R."/>
            <person name="Volodarsky M."/>
            <person name="Halperin D."/>
            <person name="Barber-Zucker S."/>
            <person name="Shalev H."/>
            <person name="Schreiber R."/>
            <person name="Gradstein L."/>
            <person name="Gurevich E."/>
            <person name="Zarivach R."/>
            <person name="Rutter G.A."/>
            <person name="Landau D."/>
            <person name="Birk O.S."/>
        </authorList>
    </citation>
    <scope>INVOLVEMENT IN BILAPES</scope>
    <scope>VARIANT BILAPES ALA-350 DEL</scope>
    <scope>CHARACTERIZATION OF VARIANT BILAPES ALA-350 DEL</scope>
    <scope>TISSUE SPECIFICITY</scope>
    <scope>SUBCELLULAR LOCATION</scope>
    <scope>FUNCTION</scope>
    <scope>TRANSPORTER ACTIVITY</scope>
</reference>
<reference key="14">
    <citation type="journal article" date="2022" name="Cold Spring Harb. Mol. Case Stud.">
        <title>Autosomal recessive SLC30A9 variants in a proband with a cerebrorenal syndrome and no parental consanguinity.</title>
        <authorList>
            <person name="Kleyner R."/>
            <person name="Arif M."/>
            <person name="Marchi E."/>
            <person name="Horowitz N."/>
            <person name="Haworth A."/>
            <person name="King B."/>
            <person name="Gavin M."/>
            <person name="Amble K."/>
            <person name="Velinov M."/>
            <person name="Lyon G.J."/>
        </authorList>
    </citation>
    <scope>INVOLVEMENT IN BILAPES</scope>
</reference>
<gene>
    <name evidence="13" type="primary">SLC30A9</name>
    <name type="synonym">C4orf1</name>
    <name type="synonym">HUEL</name>
</gene>
<accession>Q6PML9</accession>
<accession>Q4W5B6</accession>
<accession>Q7Z5I7</accession>
<accession>Q8TBB2</accession>
<accession>Q9Y6R2</accession>
<keyword id="KW-0002">3D-structure</keyword>
<keyword id="KW-0050">Antiport</keyword>
<keyword id="KW-0225">Disease variant</keyword>
<keyword id="KW-0256">Endoplasmic reticulum</keyword>
<keyword id="KW-0406">Ion transport</keyword>
<keyword id="KW-0472">Membrane</keyword>
<keyword id="KW-0496">Mitochondrion</keyword>
<keyword id="KW-0539">Nucleus</keyword>
<keyword id="KW-1267">Proteomics identification</keyword>
<keyword id="KW-1185">Reference proteome</keyword>
<keyword id="KW-0804">Transcription</keyword>
<keyword id="KW-0805">Transcription regulation</keyword>
<keyword id="KW-0809">Transit peptide</keyword>
<keyword id="KW-0812">Transmembrane</keyword>
<keyword id="KW-1133">Transmembrane helix</keyword>
<keyword id="KW-0813">Transport</keyword>
<keyword id="KW-0862">Zinc</keyword>
<keyword id="KW-0864">Zinc transport</keyword>